<accession>Q9GT50</accession>
<accession>Q9GT51</accession>
<accession>Q9GT52</accession>
<accession>Q9GT53</accession>
<accession>Q9GT54</accession>
<accession>Q9GT55</accession>
<accession>Q9GT56</accession>
<dbReference type="EMBL" id="AF280583">
    <property type="protein sequence ID" value="AAG21991.1"/>
    <property type="molecule type" value="Genomic_DNA"/>
</dbReference>
<dbReference type="EMBL" id="AF280584">
    <property type="protein sequence ID" value="AAG21992.1"/>
    <property type="molecule type" value="Genomic_DNA"/>
</dbReference>
<dbReference type="EMBL" id="AF280585">
    <property type="protein sequence ID" value="AAG21993.1"/>
    <property type="molecule type" value="Genomic_DNA"/>
</dbReference>
<dbReference type="EMBL" id="AF280586">
    <property type="protein sequence ID" value="AAG21994.1"/>
    <property type="molecule type" value="Genomic_DNA"/>
</dbReference>
<dbReference type="EMBL" id="AF280587">
    <property type="protein sequence ID" value="AAG21995.1"/>
    <property type="molecule type" value="Genomic_DNA"/>
</dbReference>
<dbReference type="EMBL" id="AF280588">
    <property type="protein sequence ID" value="AAG21996.1"/>
    <property type="molecule type" value="Genomic_DNA"/>
</dbReference>
<dbReference type="EMBL" id="AF280589">
    <property type="protein sequence ID" value="AAG21997.1"/>
    <property type="molecule type" value="Genomic_DNA"/>
</dbReference>
<dbReference type="SMR" id="Q9GT50"/>
<dbReference type="GlyCosmos" id="Q9GT50">
    <property type="glycosylation" value="6 sites, No reported glycans"/>
</dbReference>
<dbReference type="eggNOG" id="KOG4193">
    <property type="taxonomic scope" value="Eukaryota"/>
</dbReference>
<dbReference type="OrthoDB" id="6134459at2759"/>
<dbReference type="GO" id="GO:0005886">
    <property type="term" value="C:plasma membrane"/>
    <property type="evidence" value="ECO:0007669"/>
    <property type="project" value="UniProtKB-SubCell"/>
</dbReference>
<dbReference type="GO" id="GO:0008528">
    <property type="term" value="F:G protein-coupled peptide receptor activity"/>
    <property type="evidence" value="ECO:0007669"/>
    <property type="project" value="TreeGrafter"/>
</dbReference>
<dbReference type="GO" id="GO:0007166">
    <property type="term" value="P:cell surface receptor signaling pathway"/>
    <property type="evidence" value="ECO:0007669"/>
    <property type="project" value="InterPro"/>
</dbReference>
<dbReference type="GO" id="GO:0008340">
    <property type="term" value="P:determination of adult lifespan"/>
    <property type="evidence" value="ECO:0000315"/>
    <property type="project" value="UniProtKB"/>
</dbReference>
<dbReference type="GO" id="GO:0042594">
    <property type="term" value="P:response to starvation"/>
    <property type="evidence" value="ECO:0000250"/>
    <property type="project" value="UniProtKB"/>
</dbReference>
<dbReference type="CDD" id="cd15039">
    <property type="entry name" value="7tmB3_Methuselah-like"/>
    <property type="match status" value="1"/>
</dbReference>
<dbReference type="CDD" id="cd00251">
    <property type="entry name" value="Mth_Ecto"/>
    <property type="match status" value="1"/>
</dbReference>
<dbReference type="FunFam" id="1.20.1070.10:FF:000297">
    <property type="entry name" value="G-protein coupled receptor Mth"/>
    <property type="match status" value="1"/>
</dbReference>
<dbReference type="FunFam" id="2.170.180.11:FF:000001">
    <property type="entry name" value="G-protein coupled receptor Mth"/>
    <property type="match status" value="1"/>
</dbReference>
<dbReference type="FunFam" id="2.30.160.11:FF:000001">
    <property type="entry name" value="G-protein coupled receptor Mth"/>
    <property type="match status" value="1"/>
</dbReference>
<dbReference type="Gene3D" id="2.30.160.11">
    <property type="match status" value="1"/>
</dbReference>
<dbReference type="Gene3D" id="2.170.180.11">
    <property type="entry name" value="Methuselah ectodomain, domain 2"/>
    <property type="match status" value="1"/>
</dbReference>
<dbReference type="Gene3D" id="1.20.1070.10">
    <property type="entry name" value="Rhodopsin 7-helix transmembrane proteins"/>
    <property type="match status" value="1"/>
</dbReference>
<dbReference type="InterPro" id="IPR017981">
    <property type="entry name" value="GPCR_2-like_7TM"/>
</dbReference>
<dbReference type="InterPro" id="IPR000832">
    <property type="entry name" value="GPCR_2_secretin-like"/>
</dbReference>
<dbReference type="InterPro" id="IPR044860">
    <property type="entry name" value="Methusela_ecto_dom_1"/>
</dbReference>
<dbReference type="InterPro" id="IPR023311">
    <property type="entry name" value="Methusela_ecto_dom_2"/>
</dbReference>
<dbReference type="InterPro" id="IPR010596">
    <property type="entry name" value="Methuselah_N_dom"/>
</dbReference>
<dbReference type="InterPro" id="IPR036272">
    <property type="entry name" value="Methuselah_N_sf"/>
</dbReference>
<dbReference type="InterPro" id="IPR051384">
    <property type="entry name" value="Mth_GPCR"/>
</dbReference>
<dbReference type="PANTHER" id="PTHR47154">
    <property type="entry name" value="G-PROTEIN COUPLED RECEPTOR MTH-RELATED"/>
    <property type="match status" value="1"/>
</dbReference>
<dbReference type="PANTHER" id="PTHR47154:SF2">
    <property type="entry name" value="G-PROTEIN COUPLED RECEPTOR MTH-RELATED"/>
    <property type="match status" value="1"/>
</dbReference>
<dbReference type="Pfam" id="PF00002">
    <property type="entry name" value="7tm_2"/>
    <property type="match status" value="1"/>
</dbReference>
<dbReference type="Pfam" id="PF06652">
    <property type="entry name" value="Methuselah_N"/>
    <property type="match status" value="1"/>
</dbReference>
<dbReference type="SUPFAM" id="SSF81321">
    <property type="entry name" value="Family A G protein-coupled receptor-like"/>
    <property type="match status" value="1"/>
</dbReference>
<dbReference type="SUPFAM" id="SSF63877">
    <property type="entry name" value="Methuselah ectodomain"/>
    <property type="match status" value="1"/>
</dbReference>
<dbReference type="PROSITE" id="PS50261">
    <property type="entry name" value="G_PROTEIN_RECEP_F2_4"/>
    <property type="match status" value="1"/>
</dbReference>
<organism>
    <name type="scientific">Drosophila yakuba</name>
    <name type="common">Fruit fly</name>
    <dbReference type="NCBI Taxonomy" id="7245"/>
    <lineage>
        <taxon>Eukaryota</taxon>
        <taxon>Metazoa</taxon>
        <taxon>Ecdysozoa</taxon>
        <taxon>Arthropoda</taxon>
        <taxon>Hexapoda</taxon>
        <taxon>Insecta</taxon>
        <taxon>Pterygota</taxon>
        <taxon>Neoptera</taxon>
        <taxon>Endopterygota</taxon>
        <taxon>Diptera</taxon>
        <taxon>Brachycera</taxon>
        <taxon>Muscomorpha</taxon>
        <taxon>Ephydroidea</taxon>
        <taxon>Drosophilidae</taxon>
        <taxon>Drosophila</taxon>
        <taxon>Sophophora</taxon>
    </lineage>
</organism>
<gene>
    <name type="primary">mth</name>
</gene>
<name>MTH_DROYA</name>
<keyword id="KW-1003">Cell membrane</keyword>
<keyword id="KW-1015">Disulfide bond</keyword>
<keyword id="KW-0297">G-protein coupled receptor</keyword>
<keyword id="KW-0325">Glycoprotein</keyword>
<keyword id="KW-0472">Membrane</keyword>
<keyword id="KW-0675">Receptor</keyword>
<keyword id="KW-0732">Signal</keyword>
<keyword id="KW-0807">Transducer</keyword>
<keyword id="KW-0812">Transmembrane</keyword>
<keyword id="KW-1133">Transmembrane helix</keyword>
<feature type="signal peptide" evidence="1">
    <location>
        <begin position="1"/>
        <end position="27"/>
    </location>
</feature>
<feature type="chain" id="PRO_0000013022" description="G-protein coupled receptor Mth">
    <location>
        <begin position="28"/>
        <end position="517"/>
    </location>
</feature>
<feature type="topological domain" description="Extracellular" evidence="3">
    <location>
        <begin position="28"/>
        <end position="221"/>
    </location>
</feature>
<feature type="transmembrane region" description="Helical; Name=1" evidence="3">
    <location>
        <begin position="222"/>
        <end position="242"/>
    </location>
</feature>
<feature type="topological domain" description="Cytoplasmic" evidence="3">
    <location>
        <begin position="243"/>
        <end position="251"/>
    </location>
</feature>
<feature type="transmembrane region" description="Helical; Name=2" evidence="3">
    <location>
        <begin position="252"/>
        <end position="272"/>
    </location>
</feature>
<feature type="topological domain" description="Extracellular" evidence="3">
    <location>
        <begin position="273"/>
        <end position="279"/>
    </location>
</feature>
<feature type="transmembrane region" description="Helical; Name=3" evidence="3">
    <location>
        <begin position="280"/>
        <end position="300"/>
    </location>
</feature>
<feature type="topological domain" description="Cytoplasmic" evidence="3">
    <location>
        <begin position="301"/>
        <end position="323"/>
    </location>
</feature>
<feature type="transmembrane region" description="Helical; Name=4" evidence="3">
    <location>
        <begin position="324"/>
        <end position="344"/>
    </location>
</feature>
<feature type="topological domain" description="Extracellular" evidence="3">
    <location>
        <begin position="345"/>
        <end position="373"/>
    </location>
</feature>
<feature type="transmembrane region" description="Helical; Name=5" evidence="3">
    <location>
        <begin position="374"/>
        <end position="394"/>
    </location>
</feature>
<feature type="topological domain" description="Cytoplasmic" evidence="3">
    <location>
        <begin position="395"/>
        <end position="427"/>
    </location>
</feature>
<feature type="transmembrane region" description="Helical; Name=6" evidence="3">
    <location>
        <begin position="428"/>
        <end position="448"/>
    </location>
</feature>
<feature type="topological domain" description="Extracellular" evidence="3">
    <location>
        <begin position="449"/>
        <end position="457"/>
    </location>
</feature>
<feature type="transmembrane region" description="Helical; Name=7" evidence="3">
    <location>
        <begin position="458"/>
        <end position="478"/>
    </location>
</feature>
<feature type="topological domain" description="Cytoplasmic" evidence="3">
    <location>
        <begin position="479"/>
        <end position="517"/>
    </location>
</feature>
<feature type="glycosylation site" description="N-linked (GlcNAc...) asparagine" evidence="1">
    <location>
        <position position="48"/>
    </location>
</feature>
<feature type="glycosylation site" description="N-linked (GlcNAc...) asparagine" evidence="3">
    <location>
        <position position="61"/>
    </location>
</feature>
<feature type="glycosylation site" description="N-linked (GlcNAc...) asparagine" evidence="1">
    <location>
        <position position="126"/>
    </location>
</feature>
<feature type="glycosylation site" description="N-linked (GlcNAc...) asparagine" evidence="1">
    <location>
        <position position="173"/>
    </location>
</feature>
<feature type="glycosylation site" description="N-linked (GlcNAc...) asparagine" evidence="3">
    <location>
        <position position="201"/>
    </location>
</feature>
<feature type="glycosylation site" description="N-linked (GlcNAc...) asparagine" evidence="3">
    <location>
        <position position="452"/>
    </location>
</feature>
<feature type="disulfide bond" evidence="2">
    <location>
        <begin position="32"/>
        <end position="86"/>
    </location>
</feature>
<feature type="disulfide bond" evidence="2">
    <location>
        <begin position="88"/>
        <end position="93"/>
    </location>
</feature>
<feature type="disulfide bond" evidence="2">
    <location>
        <begin position="97"/>
        <end position="191"/>
    </location>
</feature>
<feature type="disulfide bond" evidence="2">
    <location>
        <begin position="98"/>
        <end position="109"/>
    </location>
</feature>
<feature type="disulfide bond" evidence="2">
    <location>
        <begin position="153"/>
        <end position="212"/>
    </location>
</feature>
<feature type="sequence variant" description="In strain: Yak_5.">
    <original>R</original>
    <variation>W</variation>
    <location>
        <position position="11"/>
    </location>
</feature>
<feature type="sequence variant" description="In strain: Yak_23 and Yak_8.">
    <original>D</original>
    <variation>N</variation>
    <location>
        <position position="39"/>
    </location>
</feature>
<feature type="sequence variant" description="In strain: Yak_2.">
    <original>G</original>
    <variation>E</variation>
    <location>
        <position position="49"/>
    </location>
</feature>
<feature type="sequence variant" description="In strain: Yak_2.">
    <original>H</original>
    <variation>Y</variation>
    <location>
        <position position="179"/>
    </location>
</feature>
<feature type="sequence variant" description="In strain: Yak_5.">
    <original>L</original>
    <variation>F</variation>
    <location>
        <position position="195"/>
    </location>
</feature>
<feature type="sequence variant" description="In strain: Yak_23.">
    <original>T</original>
    <variation>S</variation>
    <location>
        <position position="227"/>
    </location>
</feature>
<feature type="sequence variant" description="In strain: Yak_23.">
    <original>L</original>
    <variation>H</variation>
    <location>
        <position position="260"/>
    </location>
</feature>
<feature type="sequence variant" description="In strain: Yak_2.">
    <original>A</original>
    <variation>V</variation>
    <location>
        <position position="331"/>
    </location>
</feature>
<comment type="function">
    <text evidence="1">Involved in biological aging and stress response. Essential for adult survival (By similarity).</text>
</comment>
<comment type="subunit">
    <text evidence="1">Homodimer.</text>
</comment>
<comment type="subcellular location">
    <subcellularLocation>
        <location evidence="4">Cell membrane</location>
        <topology evidence="4">Multi-pass membrane protein</topology>
    </subcellularLocation>
</comment>
<comment type="similarity">
    <text evidence="4">Belongs to the G-protein coupled receptor 2 family. Mth subfamily.</text>
</comment>
<proteinExistence type="inferred from homology"/>
<reference key="1">
    <citation type="journal article" date="2000" name="Proc. Natl. Acad. Sci. U.S.A.">
        <title>Adaptive evolution of a candidate gene for aging in Drosophila.</title>
        <authorList>
            <person name="Schmidt P.S."/>
            <person name="Duvernell D.D."/>
            <person name="Eanes W.F."/>
        </authorList>
    </citation>
    <scope>NUCLEOTIDE SEQUENCE [GENOMIC DNA]</scope>
    <scope>VARIANTS</scope>
    <source>
        <strain>BG1013</strain>
        <strain>Yak_2</strain>
        <strain>Yak_23</strain>
        <strain>Yak_30</strain>
        <strain>Yak_4</strain>
        <strain>Yak_5</strain>
        <strain>Yak_8</strain>
    </source>
</reference>
<evidence type="ECO:0000250" key="1"/>
<evidence type="ECO:0000250" key="2">
    <source>
        <dbReference type="UniProtKB" id="O97148"/>
    </source>
</evidence>
<evidence type="ECO:0000255" key="3"/>
<evidence type="ECO:0000305" key="4"/>
<sequence length="517" mass="59968">MKLFWVKRLLRISTVVVTLLLLQRTNAAIPDCDYYDTVDISAAQKLPNGSYLFEGLLVPANLTAEYEFTILPDDSKQKVDKHIRGCVCKLKPCVRFCCPHNHIMDMNVCAGDMTEEELEVLDPFLNVTLDDGSVVRRHFKKELIVQWDLPMSCDGMFSLDNREKTDQYTLFENGSFFRHHDRVTLNKREYCLQHLTFVDGNESSIRIAPHNCLISPSRMGQTVVMITSLVCMVLTITVYLFVKKLQNLHGKCFMCYMVCLFMAYLLLLLNLWQMSQNFCITAGFLGYFFVMAAFLWLSVISLHLWNTFSGSAHNANRFLSEHRFLAYNTYAWGMAVVLTGITYLADKVVENEDWNPRMGFGGHCWICTQSWSAMLYFYGPMVFLIAFNITMFILTANRIIGVKKDIQKFAHRQERKQKLNSDKQTYTFFLRLFIIMGLTWSLEIGSYISQFNQTWSNVFLVADYLNWSQGIIIFILFVLKRSTLRLLMESIRGEGEEVNDSEEEISLENTKYDRNVL</sequence>
<protein>
    <recommendedName>
        <fullName>G-protein coupled receptor Mth</fullName>
    </recommendedName>
    <alternativeName>
        <fullName>Protein methuselah</fullName>
    </alternativeName>
</protein>